<name>YC54L_SYNY3</name>
<proteinExistence type="evidence at protein level"/>
<comment type="similarity">
    <text evidence="1">Belongs to the ycf54 family.</text>
</comment>
<evidence type="ECO:0000305" key="1"/>
<evidence type="ECO:0007829" key="2">
    <source>
        <dbReference type="PDB" id="5M2P"/>
    </source>
</evidence>
<keyword id="KW-0002">3D-structure</keyword>
<keyword id="KW-1185">Reference proteome</keyword>
<gene>
    <name type="ordered locus">slr1780</name>
</gene>
<protein>
    <recommendedName>
        <fullName>Ycf54-like protein</fullName>
    </recommendedName>
</protein>
<dbReference type="EMBL" id="BA000022">
    <property type="protein sequence ID" value="BAA16792.1"/>
    <property type="molecule type" value="Genomic_DNA"/>
</dbReference>
<dbReference type="PIR" id="S74640">
    <property type="entry name" value="S74640"/>
</dbReference>
<dbReference type="PDB" id="5M2P">
    <property type="method" value="X-ray"/>
    <property type="resolution" value="1.33 A"/>
    <property type="chains" value="A=28-133"/>
</dbReference>
<dbReference type="PDB" id="5M2R">
    <property type="method" value="X-ray"/>
    <property type="resolution" value="1.50 A"/>
    <property type="chains" value="A=28-133"/>
</dbReference>
<dbReference type="PDB" id="5M2U">
    <property type="method" value="X-ray"/>
    <property type="resolution" value="2.20 A"/>
    <property type="chains" value="A/B/C/D=28-133"/>
</dbReference>
<dbReference type="PDBsum" id="5M2P"/>
<dbReference type="PDBsum" id="5M2R"/>
<dbReference type="PDBsum" id="5M2U"/>
<dbReference type="SMR" id="P72777"/>
<dbReference type="STRING" id="1148.gene:10497648"/>
<dbReference type="PaxDb" id="1148-1651865"/>
<dbReference type="EnsemblBacteria" id="BAA16792">
    <property type="protein sequence ID" value="BAA16792"/>
    <property type="gene ID" value="BAA16792"/>
</dbReference>
<dbReference type="KEGG" id="syn:slr1780"/>
<dbReference type="eggNOG" id="ENOG50319CP">
    <property type="taxonomic scope" value="Bacteria"/>
</dbReference>
<dbReference type="InParanoid" id="P72777"/>
<dbReference type="PhylomeDB" id="P72777"/>
<dbReference type="BioCyc" id="MetaCyc:MONOMER-17788"/>
<dbReference type="Proteomes" id="UP000001425">
    <property type="component" value="Chromosome"/>
</dbReference>
<dbReference type="Gene3D" id="3.30.70.1860">
    <property type="entry name" value="Uncharacterised protein family Ycf54"/>
    <property type="match status" value="1"/>
</dbReference>
<dbReference type="InterPro" id="IPR019616">
    <property type="entry name" value="Ycf54"/>
</dbReference>
<dbReference type="InterPro" id="IPR038409">
    <property type="entry name" value="Ycf54-like_sf"/>
</dbReference>
<dbReference type="PANTHER" id="PTHR35319">
    <property type="match status" value="1"/>
</dbReference>
<dbReference type="PANTHER" id="PTHR35319:SF2">
    <property type="entry name" value="YCF54"/>
    <property type="match status" value="1"/>
</dbReference>
<dbReference type="Pfam" id="PF10674">
    <property type="entry name" value="Ycf54"/>
    <property type="match status" value="1"/>
</dbReference>
<feature type="chain" id="PRO_0000217387" description="Ycf54-like protein">
    <location>
        <begin position="1"/>
        <end position="133"/>
    </location>
</feature>
<feature type="strand" evidence="2">
    <location>
        <begin position="29"/>
        <end position="37"/>
    </location>
</feature>
<feature type="helix" evidence="2">
    <location>
        <begin position="38"/>
        <end position="42"/>
    </location>
</feature>
<feature type="helix" evidence="2">
    <location>
        <begin position="45"/>
        <end position="60"/>
    </location>
</feature>
<feature type="strand" evidence="2">
    <location>
        <begin position="67"/>
        <end position="73"/>
    </location>
</feature>
<feature type="helix" evidence="2">
    <location>
        <begin position="74"/>
        <end position="77"/>
    </location>
</feature>
<feature type="helix" evidence="2">
    <location>
        <begin position="79"/>
        <end position="81"/>
    </location>
</feature>
<feature type="helix" evidence="2">
    <location>
        <begin position="82"/>
        <end position="87"/>
    </location>
</feature>
<feature type="strand" evidence="2">
    <location>
        <begin position="90"/>
        <end position="98"/>
    </location>
</feature>
<feature type="helix" evidence="2">
    <location>
        <begin position="100"/>
        <end position="110"/>
    </location>
</feature>
<feature type="strand" evidence="2">
    <location>
        <begin position="114"/>
        <end position="121"/>
    </location>
</feature>
<accession>P72777</accession>
<sequence>MESWALTTPPIDIVNQYLFFIKRKTNYMATYYYALASQKFLLEEEPFEEVLKERRRDYGEKNKEIDFWQVIQPAFLNAPELAEAKAKAPEKNVAIVSTNKSFIVWVKLRLEYVLTGEFEAPSDAIPDPLASLD</sequence>
<organism>
    <name type="scientific">Synechocystis sp. (strain ATCC 27184 / PCC 6803 / Kazusa)</name>
    <dbReference type="NCBI Taxonomy" id="1111708"/>
    <lineage>
        <taxon>Bacteria</taxon>
        <taxon>Bacillati</taxon>
        <taxon>Cyanobacteriota</taxon>
        <taxon>Cyanophyceae</taxon>
        <taxon>Synechococcales</taxon>
        <taxon>Merismopediaceae</taxon>
        <taxon>Synechocystis</taxon>
    </lineage>
</organism>
<reference key="1">
    <citation type="journal article" date="1996" name="DNA Res.">
        <title>Sequence analysis of the genome of the unicellular cyanobacterium Synechocystis sp. strain PCC6803. II. Sequence determination of the entire genome and assignment of potential protein-coding regions.</title>
        <authorList>
            <person name="Kaneko T."/>
            <person name="Sato S."/>
            <person name="Kotani H."/>
            <person name="Tanaka A."/>
            <person name="Asamizu E."/>
            <person name="Nakamura Y."/>
            <person name="Miyajima N."/>
            <person name="Hirosawa M."/>
            <person name="Sugiura M."/>
            <person name="Sasamoto S."/>
            <person name="Kimura T."/>
            <person name="Hosouchi T."/>
            <person name="Matsuno A."/>
            <person name="Muraki A."/>
            <person name="Nakazaki N."/>
            <person name="Naruo K."/>
            <person name="Okumura S."/>
            <person name="Shimpo S."/>
            <person name="Takeuchi C."/>
            <person name="Wada T."/>
            <person name="Watanabe A."/>
            <person name="Yamada M."/>
            <person name="Yasuda M."/>
            <person name="Tabata S."/>
        </authorList>
    </citation>
    <scope>NUCLEOTIDE SEQUENCE [LARGE SCALE GENOMIC DNA]</scope>
    <source>
        <strain>ATCC 27184 / PCC 6803 / Kazusa</strain>
    </source>
</reference>